<reference key="1">
    <citation type="journal article" date="2001" name="Proc. Natl. Acad. Sci. U.S.A.">
        <title>Complete genome sequence of an M1 strain of Streptococcus pyogenes.</title>
        <authorList>
            <person name="Ferretti J.J."/>
            <person name="McShan W.M."/>
            <person name="Ajdic D.J."/>
            <person name="Savic D.J."/>
            <person name="Savic G."/>
            <person name="Lyon K."/>
            <person name="Primeaux C."/>
            <person name="Sezate S."/>
            <person name="Suvorov A.N."/>
            <person name="Kenton S."/>
            <person name="Lai H.S."/>
            <person name="Lin S.P."/>
            <person name="Qian Y."/>
            <person name="Jia H.G."/>
            <person name="Najar F.Z."/>
            <person name="Ren Q."/>
            <person name="Zhu H."/>
            <person name="Song L."/>
            <person name="White J."/>
            <person name="Yuan X."/>
            <person name="Clifton S.W."/>
            <person name="Roe B.A."/>
            <person name="McLaughlin R.E."/>
        </authorList>
    </citation>
    <scope>NUCLEOTIDE SEQUENCE [LARGE SCALE GENOMIC DNA]</scope>
    <source>
        <strain>ATCC 700294 / SF370 / Serotype M1</strain>
    </source>
</reference>
<reference key="2">
    <citation type="journal article" date="2005" name="J. Infect. Dis.">
        <title>Evolutionary origin and emergence of a highly successful clone of serotype M1 group A Streptococcus involved multiple horizontal gene transfer events.</title>
        <authorList>
            <person name="Sumby P."/>
            <person name="Porcella S.F."/>
            <person name="Madrigal A.G."/>
            <person name="Barbian K.D."/>
            <person name="Virtaneva K."/>
            <person name="Ricklefs S.M."/>
            <person name="Sturdevant D.E."/>
            <person name="Graham M.R."/>
            <person name="Vuopio-Varkila J."/>
            <person name="Hoe N.P."/>
            <person name="Musser J.M."/>
        </authorList>
    </citation>
    <scope>NUCLEOTIDE SEQUENCE [LARGE SCALE GENOMIC DNA]</scope>
    <source>
        <strain>ATCC BAA-947 / MGAS5005 / Serotype M1</strain>
    </source>
</reference>
<sequence>MGKCQVISHPLIQHKLSILRRQTTSTKDFRELVNEIAMLMGYEVSRDLPLEDVDIQTPVSKTVQKQLAGKKLAIVPILRAGIGMVDGLLSLVPAAKVGHIGMYRNEETLEPVEYLVKLPEDINQRQIFLVDPMLATGGSAILAVDSLKKRGAANIKFVCLVAAPEGVKKLQEAHPDIDIFTAALDDHLNEHGYIVPGLGDAGDRLFGTK</sequence>
<proteinExistence type="inferred from homology"/>
<comment type="function">
    <text evidence="1">Catalyzes the conversion of uracil and 5-phospho-alpha-D-ribose 1-diphosphate (PRPP) to UMP and diphosphate.</text>
</comment>
<comment type="catalytic activity">
    <reaction evidence="1">
        <text>UMP + diphosphate = 5-phospho-alpha-D-ribose 1-diphosphate + uracil</text>
        <dbReference type="Rhea" id="RHEA:13017"/>
        <dbReference type="ChEBI" id="CHEBI:17568"/>
        <dbReference type="ChEBI" id="CHEBI:33019"/>
        <dbReference type="ChEBI" id="CHEBI:57865"/>
        <dbReference type="ChEBI" id="CHEBI:58017"/>
        <dbReference type="EC" id="2.4.2.9"/>
    </reaction>
</comment>
<comment type="cofactor">
    <cofactor evidence="1">
        <name>Mg(2+)</name>
        <dbReference type="ChEBI" id="CHEBI:18420"/>
    </cofactor>
    <text evidence="1">Binds 1 Mg(2+) ion per subunit. The magnesium is bound as Mg-PRPP.</text>
</comment>
<comment type="activity regulation">
    <text evidence="1">Allosterically activated by GTP.</text>
</comment>
<comment type="pathway">
    <text evidence="1">Pyrimidine metabolism; UMP biosynthesis via salvage pathway; UMP from uracil: step 1/1.</text>
</comment>
<comment type="similarity">
    <text evidence="1">Belongs to the UPRTase family.</text>
</comment>
<dbReference type="EC" id="2.4.2.9" evidence="1"/>
<dbReference type="EMBL" id="AE004092">
    <property type="protein sequence ID" value="AAK33430.1"/>
    <property type="molecule type" value="Genomic_DNA"/>
</dbReference>
<dbReference type="EMBL" id="CP000017">
    <property type="protein sequence ID" value="AAZ50946.1"/>
    <property type="molecule type" value="Genomic_DNA"/>
</dbReference>
<dbReference type="RefSeq" id="NP_268709.1">
    <property type="nucleotide sequence ID" value="NC_002737.2"/>
</dbReference>
<dbReference type="SMR" id="P67400"/>
<dbReference type="PaxDb" id="1314-HKU360_00365"/>
<dbReference type="KEGG" id="spy:SPy_0392"/>
<dbReference type="KEGG" id="spz:M5005_Spy0327"/>
<dbReference type="PATRIC" id="fig|160490.10.peg.337"/>
<dbReference type="HOGENOM" id="CLU_067096_2_2_9"/>
<dbReference type="OMA" id="KHKIGLM"/>
<dbReference type="UniPathway" id="UPA00574">
    <property type="reaction ID" value="UER00636"/>
</dbReference>
<dbReference type="Proteomes" id="UP000000750">
    <property type="component" value="Chromosome"/>
</dbReference>
<dbReference type="GO" id="GO:0005525">
    <property type="term" value="F:GTP binding"/>
    <property type="evidence" value="ECO:0007669"/>
    <property type="project" value="UniProtKB-KW"/>
</dbReference>
<dbReference type="GO" id="GO:0000287">
    <property type="term" value="F:magnesium ion binding"/>
    <property type="evidence" value="ECO:0007669"/>
    <property type="project" value="UniProtKB-UniRule"/>
</dbReference>
<dbReference type="GO" id="GO:0004845">
    <property type="term" value="F:uracil phosphoribosyltransferase activity"/>
    <property type="evidence" value="ECO:0007669"/>
    <property type="project" value="UniProtKB-UniRule"/>
</dbReference>
<dbReference type="GO" id="GO:0044206">
    <property type="term" value="P:UMP salvage"/>
    <property type="evidence" value="ECO:0007669"/>
    <property type="project" value="UniProtKB-UniRule"/>
</dbReference>
<dbReference type="GO" id="GO:0006223">
    <property type="term" value="P:uracil salvage"/>
    <property type="evidence" value="ECO:0007669"/>
    <property type="project" value="InterPro"/>
</dbReference>
<dbReference type="CDD" id="cd06223">
    <property type="entry name" value="PRTases_typeI"/>
    <property type="match status" value="1"/>
</dbReference>
<dbReference type="FunFam" id="3.40.50.2020:FF:000003">
    <property type="entry name" value="Uracil phosphoribosyltransferase"/>
    <property type="match status" value="1"/>
</dbReference>
<dbReference type="Gene3D" id="3.40.50.2020">
    <property type="match status" value="1"/>
</dbReference>
<dbReference type="HAMAP" id="MF_01218_B">
    <property type="entry name" value="Upp_B"/>
    <property type="match status" value="1"/>
</dbReference>
<dbReference type="InterPro" id="IPR000836">
    <property type="entry name" value="PRibTrfase_dom"/>
</dbReference>
<dbReference type="InterPro" id="IPR029057">
    <property type="entry name" value="PRTase-like"/>
</dbReference>
<dbReference type="InterPro" id="IPR034332">
    <property type="entry name" value="Upp_B"/>
</dbReference>
<dbReference type="InterPro" id="IPR050054">
    <property type="entry name" value="UPRTase/APRTase"/>
</dbReference>
<dbReference type="InterPro" id="IPR005765">
    <property type="entry name" value="Ura_phspho_trans"/>
</dbReference>
<dbReference type="NCBIfam" id="NF001097">
    <property type="entry name" value="PRK00129.1"/>
    <property type="match status" value="1"/>
</dbReference>
<dbReference type="NCBIfam" id="TIGR01091">
    <property type="entry name" value="upp"/>
    <property type="match status" value="1"/>
</dbReference>
<dbReference type="PANTHER" id="PTHR32315">
    <property type="entry name" value="ADENINE PHOSPHORIBOSYLTRANSFERASE"/>
    <property type="match status" value="1"/>
</dbReference>
<dbReference type="PANTHER" id="PTHR32315:SF4">
    <property type="entry name" value="URACIL PHOSPHORIBOSYLTRANSFERASE, CHLOROPLASTIC"/>
    <property type="match status" value="1"/>
</dbReference>
<dbReference type="Pfam" id="PF14681">
    <property type="entry name" value="UPRTase"/>
    <property type="match status" value="1"/>
</dbReference>
<dbReference type="SUPFAM" id="SSF53271">
    <property type="entry name" value="PRTase-like"/>
    <property type="match status" value="1"/>
</dbReference>
<organism>
    <name type="scientific">Streptococcus pyogenes serotype M1</name>
    <dbReference type="NCBI Taxonomy" id="301447"/>
    <lineage>
        <taxon>Bacteria</taxon>
        <taxon>Bacillati</taxon>
        <taxon>Bacillota</taxon>
        <taxon>Bacilli</taxon>
        <taxon>Lactobacillales</taxon>
        <taxon>Streptococcaceae</taxon>
        <taxon>Streptococcus</taxon>
    </lineage>
</organism>
<feature type="chain" id="PRO_0000120896" description="Uracil phosphoribosyltransferase">
    <location>
        <begin position="1"/>
        <end position="209"/>
    </location>
</feature>
<feature type="binding site" evidence="1">
    <location>
        <position position="79"/>
    </location>
    <ligand>
        <name>5-phospho-alpha-D-ribose 1-diphosphate</name>
        <dbReference type="ChEBI" id="CHEBI:58017"/>
    </ligand>
</feature>
<feature type="binding site" evidence="1">
    <location>
        <position position="104"/>
    </location>
    <ligand>
        <name>5-phospho-alpha-D-ribose 1-diphosphate</name>
        <dbReference type="ChEBI" id="CHEBI:58017"/>
    </ligand>
</feature>
<feature type="binding site" evidence="1">
    <location>
        <begin position="131"/>
        <end position="139"/>
    </location>
    <ligand>
        <name>5-phospho-alpha-D-ribose 1-diphosphate</name>
        <dbReference type="ChEBI" id="CHEBI:58017"/>
    </ligand>
</feature>
<feature type="binding site" evidence="1">
    <location>
        <position position="194"/>
    </location>
    <ligand>
        <name>uracil</name>
        <dbReference type="ChEBI" id="CHEBI:17568"/>
    </ligand>
</feature>
<feature type="binding site" evidence="1">
    <location>
        <begin position="199"/>
        <end position="201"/>
    </location>
    <ligand>
        <name>uracil</name>
        <dbReference type="ChEBI" id="CHEBI:17568"/>
    </ligand>
</feature>
<feature type="binding site" evidence="1">
    <location>
        <position position="200"/>
    </location>
    <ligand>
        <name>5-phospho-alpha-D-ribose 1-diphosphate</name>
        <dbReference type="ChEBI" id="CHEBI:58017"/>
    </ligand>
</feature>
<keyword id="KW-0021">Allosteric enzyme</keyword>
<keyword id="KW-0328">Glycosyltransferase</keyword>
<keyword id="KW-0342">GTP-binding</keyword>
<keyword id="KW-0460">Magnesium</keyword>
<keyword id="KW-0547">Nucleotide-binding</keyword>
<keyword id="KW-1185">Reference proteome</keyword>
<keyword id="KW-0808">Transferase</keyword>
<accession>P67400</accession>
<accession>P59000</accession>
<accession>Q490M2</accession>
<accession>Q9A194</accession>
<gene>
    <name evidence="1" type="primary">upp</name>
    <name type="ordered locus">SPy_0392</name>
    <name type="ordered locus">M5005_Spy0327</name>
</gene>
<name>UPP_STRP1</name>
<protein>
    <recommendedName>
        <fullName evidence="1">Uracil phosphoribosyltransferase</fullName>
        <ecNumber evidence="1">2.4.2.9</ecNumber>
    </recommendedName>
    <alternativeName>
        <fullName evidence="1">UMP pyrophosphorylase</fullName>
    </alternativeName>
    <alternativeName>
        <fullName evidence="1">UPRTase</fullName>
    </alternativeName>
</protein>
<evidence type="ECO:0000255" key="1">
    <source>
        <dbReference type="HAMAP-Rule" id="MF_01218"/>
    </source>
</evidence>